<accession>B5EM98</accession>
<comment type="function">
    <text evidence="1">One of the primary rRNA binding proteins, it binds directly to 16S rRNA where it nucleates assembly of the body of the 30S subunit.</text>
</comment>
<comment type="function">
    <text evidence="1">With S5 and S12 plays an important role in translational accuracy.</text>
</comment>
<comment type="subunit">
    <text evidence="1">Part of the 30S ribosomal subunit. Contacts protein S5. The interaction surface between S4 and S5 is involved in control of translational fidelity.</text>
</comment>
<comment type="similarity">
    <text evidence="1">Belongs to the universal ribosomal protein uS4 family.</text>
</comment>
<keyword id="KW-0687">Ribonucleoprotein</keyword>
<keyword id="KW-0689">Ribosomal protein</keyword>
<keyword id="KW-0694">RNA-binding</keyword>
<keyword id="KW-0699">rRNA-binding</keyword>
<reference key="1">
    <citation type="submission" date="2008-08" db="EMBL/GenBank/DDBJ databases">
        <title>Complete sequence of Acidithiobacillus ferrooxidans ATCC 53993.</title>
        <authorList>
            <person name="Lucas S."/>
            <person name="Copeland A."/>
            <person name="Lapidus A."/>
            <person name="Glavina del Rio T."/>
            <person name="Dalin E."/>
            <person name="Tice H."/>
            <person name="Bruce D."/>
            <person name="Goodwin L."/>
            <person name="Pitluck S."/>
            <person name="Sims D."/>
            <person name="Brettin T."/>
            <person name="Detter J.C."/>
            <person name="Han C."/>
            <person name="Kuske C.R."/>
            <person name="Larimer F."/>
            <person name="Land M."/>
            <person name="Hauser L."/>
            <person name="Kyrpides N."/>
            <person name="Lykidis A."/>
            <person name="Borole A.P."/>
        </authorList>
    </citation>
    <scope>NUCLEOTIDE SEQUENCE [LARGE SCALE GENOMIC DNA]</scope>
    <source>
        <strain>ATCC 53993 / BNL-5-31</strain>
    </source>
</reference>
<gene>
    <name evidence="1" type="primary">rpsD</name>
    <name type="ordered locus">Lferr_0523</name>
</gene>
<protein>
    <recommendedName>
        <fullName evidence="1">Small ribosomal subunit protein uS4</fullName>
    </recommendedName>
    <alternativeName>
        <fullName evidence="2">30S ribosomal protein S4</fullName>
    </alternativeName>
</protein>
<evidence type="ECO:0000255" key="1">
    <source>
        <dbReference type="HAMAP-Rule" id="MF_01306"/>
    </source>
</evidence>
<evidence type="ECO:0000305" key="2"/>
<sequence length="208" mass="23366">MAKYTGPSCRLCRREGGKLFLKGEKCFSDKCPVSIRAYAPGQHGQRRGRVSEYGGQLREKQKIRRIYGVLEGQFRRYFQRASQARGVTGELLLRFLELRLDNVAYRLGFGASRAEARQVVRHGHILVNGRRVDIPSYQVRAGDVVSVAEAARTHIRIAASVEATAGRGFPEWVSMDTTELKATIKAVPVREDMAPDLNEQVVVELYSK</sequence>
<name>RS4_ACIF5</name>
<feature type="chain" id="PRO_1000140674" description="Small ribosomal subunit protein uS4">
    <location>
        <begin position="1"/>
        <end position="208"/>
    </location>
</feature>
<feature type="domain" description="S4 RNA-binding" evidence="1">
    <location>
        <begin position="98"/>
        <end position="159"/>
    </location>
</feature>
<dbReference type="EMBL" id="CP001132">
    <property type="protein sequence ID" value="ACH82777.1"/>
    <property type="molecule type" value="Genomic_DNA"/>
</dbReference>
<dbReference type="RefSeq" id="WP_012536098.1">
    <property type="nucleotide sequence ID" value="NC_011206.1"/>
</dbReference>
<dbReference type="SMR" id="B5EM98"/>
<dbReference type="GeneID" id="65279730"/>
<dbReference type="KEGG" id="afe:Lferr_0523"/>
<dbReference type="eggNOG" id="COG0522">
    <property type="taxonomic scope" value="Bacteria"/>
</dbReference>
<dbReference type="HOGENOM" id="CLU_092403_0_2_6"/>
<dbReference type="GO" id="GO:0015935">
    <property type="term" value="C:small ribosomal subunit"/>
    <property type="evidence" value="ECO:0007669"/>
    <property type="project" value="InterPro"/>
</dbReference>
<dbReference type="GO" id="GO:0019843">
    <property type="term" value="F:rRNA binding"/>
    <property type="evidence" value="ECO:0007669"/>
    <property type="project" value="UniProtKB-UniRule"/>
</dbReference>
<dbReference type="GO" id="GO:0003735">
    <property type="term" value="F:structural constituent of ribosome"/>
    <property type="evidence" value="ECO:0007669"/>
    <property type="project" value="InterPro"/>
</dbReference>
<dbReference type="GO" id="GO:0042274">
    <property type="term" value="P:ribosomal small subunit biogenesis"/>
    <property type="evidence" value="ECO:0007669"/>
    <property type="project" value="TreeGrafter"/>
</dbReference>
<dbReference type="GO" id="GO:0006412">
    <property type="term" value="P:translation"/>
    <property type="evidence" value="ECO:0007669"/>
    <property type="project" value="UniProtKB-UniRule"/>
</dbReference>
<dbReference type="CDD" id="cd00165">
    <property type="entry name" value="S4"/>
    <property type="match status" value="1"/>
</dbReference>
<dbReference type="FunFam" id="1.10.1050.10:FF:000001">
    <property type="entry name" value="30S ribosomal protein S4"/>
    <property type="match status" value="1"/>
</dbReference>
<dbReference type="FunFam" id="3.10.290.10:FF:000001">
    <property type="entry name" value="30S ribosomal protein S4"/>
    <property type="match status" value="1"/>
</dbReference>
<dbReference type="Gene3D" id="1.10.1050.10">
    <property type="entry name" value="Ribosomal Protein S4 Delta 41, Chain A, domain 1"/>
    <property type="match status" value="1"/>
</dbReference>
<dbReference type="Gene3D" id="3.10.290.10">
    <property type="entry name" value="RNA-binding S4 domain"/>
    <property type="match status" value="1"/>
</dbReference>
<dbReference type="HAMAP" id="MF_01306_B">
    <property type="entry name" value="Ribosomal_uS4_B"/>
    <property type="match status" value="1"/>
</dbReference>
<dbReference type="InterPro" id="IPR022801">
    <property type="entry name" value="Ribosomal_uS4"/>
</dbReference>
<dbReference type="InterPro" id="IPR005709">
    <property type="entry name" value="Ribosomal_uS4_bac-type"/>
</dbReference>
<dbReference type="InterPro" id="IPR001912">
    <property type="entry name" value="Ribosomal_uS4_N"/>
</dbReference>
<dbReference type="InterPro" id="IPR002942">
    <property type="entry name" value="S4_RNA-bd"/>
</dbReference>
<dbReference type="InterPro" id="IPR036986">
    <property type="entry name" value="S4_RNA-bd_sf"/>
</dbReference>
<dbReference type="NCBIfam" id="NF003717">
    <property type="entry name" value="PRK05327.1"/>
    <property type="match status" value="1"/>
</dbReference>
<dbReference type="NCBIfam" id="TIGR01017">
    <property type="entry name" value="rpsD_bact"/>
    <property type="match status" value="1"/>
</dbReference>
<dbReference type="PANTHER" id="PTHR11831">
    <property type="entry name" value="30S 40S RIBOSOMAL PROTEIN"/>
    <property type="match status" value="1"/>
</dbReference>
<dbReference type="PANTHER" id="PTHR11831:SF4">
    <property type="entry name" value="SMALL RIBOSOMAL SUBUNIT PROTEIN US4M"/>
    <property type="match status" value="1"/>
</dbReference>
<dbReference type="Pfam" id="PF00163">
    <property type="entry name" value="Ribosomal_S4"/>
    <property type="match status" value="1"/>
</dbReference>
<dbReference type="Pfam" id="PF01479">
    <property type="entry name" value="S4"/>
    <property type="match status" value="1"/>
</dbReference>
<dbReference type="SMART" id="SM01390">
    <property type="entry name" value="Ribosomal_S4"/>
    <property type="match status" value="1"/>
</dbReference>
<dbReference type="SMART" id="SM00363">
    <property type="entry name" value="S4"/>
    <property type="match status" value="1"/>
</dbReference>
<dbReference type="SUPFAM" id="SSF55174">
    <property type="entry name" value="Alpha-L RNA-binding motif"/>
    <property type="match status" value="1"/>
</dbReference>
<dbReference type="PROSITE" id="PS50889">
    <property type="entry name" value="S4"/>
    <property type="match status" value="1"/>
</dbReference>
<organism>
    <name type="scientific">Acidithiobacillus ferrooxidans (strain ATCC 53993 / BNL-5-31)</name>
    <name type="common">Leptospirillum ferrooxidans (ATCC 53993)</name>
    <dbReference type="NCBI Taxonomy" id="380394"/>
    <lineage>
        <taxon>Bacteria</taxon>
        <taxon>Pseudomonadati</taxon>
        <taxon>Pseudomonadota</taxon>
        <taxon>Acidithiobacillia</taxon>
        <taxon>Acidithiobacillales</taxon>
        <taxon>Acidithiobacillaceae</taxon>
        <taxon>Acidithiobacillus</taxon>
    </lineage>
</organism>
<proteinExistence type="inferred from homology"/>